<feature type="initiator methionine" description="Removed" evidence="1">
    <location>
        <position position="1"/>
    </location>
</feature>
<feature type="chain" id="PRO_0000111162" description="Small ribosomal subunit protein bS18">
    <location>
        <begin position="2"/>
        <end position="75"/>
    </location>
</feature>
<feature type="modified residue" description="N-acetylalanine" evidence="1">
    <location>
        <position position="2"/>
    </location>
</feature>
<gene>
    <name type="primary">rpsR</name>
    <name type="synonym">rps18</name>
    <name type="ordered locus">HI_0545</name>
</gene>
<name>RS18_HAEIN</name>
<protein>
    <recommendedName>
        <fullName evidence="3">Small ribosomal subunit protein bS18</fullName>
    </recommendedName>
    <alternativeName>
        <fullName>30S ribosomal protein S18</fullName>
    </alternativeName>
</protein>
<dbReference type="EMBL" id="L42023">
    <property type="protein sequence ID" value="AAC22203.1"/>
    <property type="molecule type" value="Genomic_DNA"/>
</dbReference>
<dbReference type="PIR" id="E64076">
    <property type="entry name" value="E64076"/>
</dbReference>
<dbReference type="RefSeq" id="NP_438703.1">
    <property type="nucleotide sequence ID" value="NC_000907.1"/>
</dbReference>
<dbReference type="SMR" id="P66457"/>
<dbReference type="STRING" id="71421.HI_0545"/>
<dbReference type="EnsemblBacteria" id="AAC22203">
    <property type="protein sequence ID" value="AAC22203"/>
    <property type="gene ID" value="HI_0545"/>
</dbReference>
<dbReference type="KEGG" id="hin:HI_0545"/>
<dbReference type="PATRIC" id="fig|71421.8.peg.564"/>
<dbReference type="eggNOG" id="COG0238">
    <property type="taxonomic scope" value="Bacteria"/>
</dbReference>
<dbReference type="HOGENOM" id="CLU_148710_2_2_6"/>
<dbReference type="OrthoDB" id="9812008at2"/>
<dbReference type="PhylomeDB" id="P66457"/>
<dbReference type="BioCyc" id="HINF71421:G1GJ1-558-MONOMER"/>
<dbReference type="PRO" id="PR:P66457"/>
<dbReference type="Proteomes" id="UP000000579">
    <property type="component" value="Chromosome"/>
</dbReference>
<dbReference type="GO" id="GO:0022627">
    <property type="term" value="C:cytosolic small ribosomal subunit"/>
    <property type="evidence" value="ECO:0000318"/>
    <property type="project" value="GO_Central"/>
</dbReference>
<dbReference type="GO" id="GO:0070181">
    <property type="term" value="F:small ribosomal subunit rRNA binding"/>
    <property type="evidence" value="ECO:0000318"/>
    <property type="project" value="GO_Central"/>
</dbReference>
<dbReference type="GO" id="GO:0003735">
    <property type="term" value="F:structural constituent of ribosome"/>
    <property type="evidence" value="ECO:0000318"/>
    <property type="project" value="GO_Central"/>
</dbReference>
<dbReference type="GO" id="GO:0006412">
    <property type="term" value="P:translation"/>
    <property type="evidence" value="ECO:0000318"/>
    <property type="project" value="GO_Central"/>
</dbReference>
<dbReference type="FunFam" id="4.10.640.10:FF:000001">
    <property type="entry name" value="30S ribosomal protein S18"/>
    <property type="match status" value="1"/>
</dbReference>
<dbReference type="Gene3D" id="4.10.640.10">
    <property type="entry name" value="Ribosomal protein S18"/>
    <property type="match status" value="1"/>
</dbReference>
<dbReference type="HAMAP" id="MF_00270">
    <property type="entry name" value="Ribosomal_bS18"/>
    <property type="match status" value="1"/>
</dbReference>
<dbReference type="InterPro" id="IPR001648">
    <property type="entry name" value="Ribosomal_bS18"/>
</dbReference>
<dbReference type="InterPro" id="IPR018275">
    <property type="entry name" value="Ribosomal_bS18_CS"/>
</dbReference>
<dbReference type="InterPro" id="IPR036870">
    <property type="entry name" value="Ribosomal_bS18_sf"/>
</dbReference>
<dbReference type="NCBIfam" id="TIGR00165">
    <property type="entry name" value="S18"/>
    <property type="match status" value="1"/>
</dbReference>
<dbReference type="PANTHER" id="PTHR13479">
    <property type="entry name" value="30S RIBOSOMAL PROTEIN S18"/>
    <property type="match status" value="1"/>
</dbReference>
<dbReference type="PANTHER" id="PTHR13479:SF40">
    <property type="entry name" value="SMALL RIBOSOMAL SUBUNIT PROTEIN BS18M"/>
    <property type="match status" value="1"/>
</dbReference>
<dbReference type="Pfam" id="PF01084">
    <property type="entry name" value="Ribosomal_S18"/>
    <property type="match status" value="1"/>
</dbReference>
<dbReference type="PRINTS" id="PR00974">
    <property type="entry name" value="RIBOSOMALS18"/>
</dbReference>
<dbReference type="SUPFAM" id="SSF46911">
    <property type="entry name" value="Ribosomal protein S18"/>
    <property type="match status" value="1"/>
</dbReference>
<dbReference type="PROSITE" id="PS00057">
    <property type="entry name" value="RIBOSOMAL_S18"/>
    <property type="match status" value="1"/>
</dbReference>
<sequence length="75" mass="8942">MARYFRRRKFCRFTAENVVEIDYKDIATLKNYISESGKIVPSRITGTRAKYQRQLARAIKRARYLALLPYTDNHQ</sequence>
<proteinExistence type="inferred from homology"/>
<evidence type="ECO:0000250" key="1"/>
<evidence type="ECO:0000255" key="2">
    <source>
        <dbReference type="HAMAP-Rule" id="MF_00270"/>
    </source>
</evidence>
<evidence type="ECO:0000305" key="3"/>
<accession>P66457</accession>
<accession>P44384</accession>
<organism>
    <name type="scientific">Haemophilus influenzae (strain ATCC 51907 / DSM 11121 / KW20 / Rd)</name>
    <dbReference type="NCBI Taxonomy" id="71421"/>
    <lineage>
        <taxon>Bacteria</taxon>
        <taxon>Pseudomonadati</taxon>
        <taxon>Pseudomonadota</taxon>
        <taxon>Gammaproteobacteria</taxon>
        <taxon>Pasteurellales</taxon>
        <taxon>Pasteurellaceae</taxon>
        <taxon>Haemophilus</taxon>
    </lineage>
</organism>
<keyword id="KW-0007">Acetylation</keyword>
<keyword id="KW-1185">Reference proteome</keyword>
<keyword id="KW-0687">Ribonucleoprotein</keyword>
<keyword id="KW-0689">Ribosomal protein</keyword>
<keyword id="KW-0694">RNA-binding</keyword>
<keyword id="KW-0699">rRNA-binding</keyword>
<reference key="1">
    <citation type="journal article" date="1995" name="Science">
        <title>Whole-genome random sequencing and assembly of Haemophilus influenzae Rd.</title>
        <authorList>
            <person name="Fleischmann R.D."/>
            <person name="Adams M.D."/>
            <person name="White O."/>
            <person name="Clayton R.A."/>
            <person name="Kirkness E.F."/>
            <person name="Kerlavage A.R."/>
            <person name="Bult C.J."/>
            <person name="Tomb J.-F."/>
            <person name="Dougherty B.A."/>
            <person name="Merrick J.M."/>
            <person name="McKenney K."/>
            <person name="Sutton G.G."/>
            <person name="FitzHugh W."/>
            <person name="Fields C.A."/>
            <person name="Gocayne J.D."/>
            <person name="Scott J.D."/>
            <person name="Shirley R."/>
            <person name="Liu L.-I."/>
            <person name="Glodek A."/>
            <person name="Kelley J.M."/>
            <person name="Weidman J.F."/>
            <person name="Phillips C.A."/>
            <person name="Spriggs T."/>
            <person name="Hedblom E."/>
            <person name="Cotton M.D."/>
            <person name="Utterback T.R."/>
            <person name="Hanna M.C."/>
            <person name="Nguyen D.T."/>
            <person name="Saudek D.M."/>
            <person name="Brandon R.C."/>
            <person name="Fine L.D."/>
            <person name="Fritchman J.L."/>
            <person name="Fuhrmann J.L."/>
            <person name="Geoghagen N.S.M."/>
            <person name="Gnehm C.L."/>
            <person name="McDonald L.A."/>
            <person name="Small K.V."/>
            <person name="Fraser C.M."/>
            <person name="Smith H.O."/>
            <person name="Venter J.C."/>
        </authorList>
    </citation>
    <scope>NUCLEOTIDE SEQUENCE [LARGE SCALE GENOMIC DNA]</scope>
    <source>
        <strain>ATCC 51907 / DSM 11121 / KW20 / Rd</strain>
    </source>
</reference>
<comment type="function">
    <text evidence="2">Binds as a heterodimer with protein bS6 to the central domain of the 16S rRNA, where it helps stabilize the platform of the 30S subunit.</text>
</comment>
<comment type="subunit">
    <text evidence="2">Part of the 30S ribosomal subunit. Forms a tight heterodimer with protein bS6.</text>
</comment>
<comment type="similarity">
    <text evidence="3">Belongs to the bacterial ribosomal protein bS18 family.</text>
</comment>